<keyword id="KW-0997">Cell inner membrane</keyword>
<keyword id="KW-1003">Cell membrane</keyword>
<keyword id="KW-0472">Membrane</keyword>
<keyword id="KW-1185">Reference proteome</keyword>
<keyword id="KW-0812">Transmembrane</keyword>
<keyword id="KW-1133">Transmembrane helix</keyword>
<reference key="1">
    <citation type="journal article" date="2002" name="Nature">
        <title>Genome sequence of the plant pathogen Ralstonia solanacearum.</title>
        <authorList>
            <person name="Salanoubat M."/>
            <person name="Genin S."/>
            <person name="Artiguenave F."/>
            <person name="Gouzy J."/>
            <person name="Mangenot S."/>
            <person name="Arlat M."/>
            <person name="Billault A."/>
            <person name="Brottier P."/>
            <person name="Camus J.-C."/>
            <person name="Cattolico L."/>
            <person name="Chandler M."/>
            <person name="Choisne N."/>
            <person name="Claudel-Renard C."/>
            <person name="Cunnac S."/>
            <person name="Demange N."/>
            <person name="Gaspin C."/>
            <person name="Lavie M."/>
            <person name="Moisan A."/>
            <person name="Robert C."/>
            <person name="Saurin W."/>
            <person name="Schiex T."/>
            <person name="Siguier P."/>
            <person name="Thebault P."/>
            <person name="Whalen M."/>
            <person name="Wincker P."/>
            <person name="Levy M."/>
            <person name="Weissenbach J."/>
            <person name="Boucher C.A."/>
        </authorList>
    </citation>
    <scope>NUCLEOTIDE SEQUENCE [LARGE SCALE GENOMIC DNA]</scope>
    <source>
        <strain>ATCC BAA-1114 / GMI1000</strain>
    </source>
</reference>
<sequence>MQFDTRVLRQWNVPKLRALQRYALRRAGEDSLPQVAGSLTFTTVLSLVPILTVAFALFTAFPMFQSFRAAIEGYLFSNLVPGNISRPILTYLNQFSHNAKGLTAAGLVGLVVTSVMTMLTVENALNAIWRVRQRRPLAQRVLVFWALVSFGPVLIGASLSVSSYLVSVSAGYVAKLPYGLGVVVGLVPILLSAIAFAMLYVFVPNTLVAWRDAFLAGLVAAVAFEIAKRGFGYYVARFPTYTAVYGTFAALPIFLLWIYVSWLVTLLGATIAATLPIIRQGYWQRRAFPGSEFFDALGILLLLHRARDHAPRTLGELDIGRRLQLEADYVADLLIQLKTLHLVGKLQQDRGQAHWALLCDAHTTTLRPLYEKLVLSLPRLSRTAFAHQLGDTRVLEAQLHNPALDCTLEAVFASGEPGVVKAAAEAAAAPAAATLAASARA</sequence>
<gene>
    <name type="ordered locus">RSc1559</name>
</gene>
<dbReference type="EMBL" id="AL646052">
    <property type="protein sequence ID" value="CAD15261.1"/>
    <property type="molecule type" value="Genomic_DNA"/>
</dbReference>
<dbReference type="RefSeq" id="WP_011001504.1">
    <property type="nucleotide sequence ID" value="NC_003295.1"/>
</dbReference>
<dbReference type="STRING" id="267608.RSc1559"/>
<dbReference type="EnsemblBacteria" id="CAD15261">
    <property type="protein sequence ID" value="CAD15261"/>
    <property type="gene ID" value="RSc1559"/>
</dbReference>
<dbReference type="KEGG" id="rso:RSc1559"/>
<dbReference type="eggNOG" id="COG1295">
    <property type="taxonomic scope" value="Bacteria"/>
</dbReference>
<dbReference type="HOGENOM" id="CLU_032288_1_2_4"/>
<dbReference type="Proteomes" id="UP000001436">
    <property type="component" value="Chromosome"/>
</dbReference>
<dbReference type="GO" id="GO:0005886">
    <property type="term" value="C:plasma membrane"/>
    <property type="evidence" value="ECO:0007669"/>
    <property type="project" value="UniProtKB-SubCell"/>
</dbReference>
<dbReference type="HAMAP" id="MF_00672">
    <property type="entry name" value="UPF0761"/>
    <property type="match status" value="1"/>
</dbReference>
<dbReference type="InterPro" id="IPR023679">
    <property type="entry name" value="UPF0761_bac"/>
</dbReference>
<dbReference type="InterPro" id="IPR017039">
    <property type="entry name" value="Virul_fac_BrkB"/>
</dbReference>
<dbReference type="NCBIfam" id="TIGR00765">
    <property type="entry name" value="yihY_not_rbn"/>
    <property type="match status" value="1"/>
</dbReference>
<dbReference type="PANTHER" id="PTHR30213">
    <property type="entry name" value="INNER MEMBRANE PROTEIN YHJD"/>
    <property type="match status" value="1"/>
</dbReference>
<dbReference type="PANTHER" id="PTHR30213:SF0">
    <property type="entry name" value="UPF0761 MEMBRANE PROTEIN YIHY"/>
    <property type="match status" value="1"/>
</dbReference>
<dbReference type="Pfam" id="PF03631">
    <property type="entry name" value="Virul_fac_BrkB"/>
    <property type="match status" value="1"/>
</dbReference>
<organism>
    <name type="scientific">Ralstonia nicotianae (strain ATCC BAA-1114 / GMI1000)</name>
    <name type="common">Ralstonia solanacearum</name>
    <dbReference type="NCBI Taxonomy" id="267608"/>
    <lineage>
        <taxon>Bacteria</taxon>
        <taxon>Pseudomonadati</taxon>
        <taxon>Pseudomonadota</taxon>
        <taxon>Betaproteobacteria</taxon>
        <taxon>Burkholderiales</taxon>
        <taxon>Burkholderiaceae</taxon>
        <taxon>Ralstonia</taxon>
        <taxon>Ralstonia solanacearum species complex</taxon>
    </lineage>
</organism>
<proteinExistence type="inferred from homology"/>
<accession>Q8XZ47</accession>
<evidence type="ECO:0000255" key="1">
    <source>
        <dbReference type="HAMAP-Rule" id="MF_00672"/>
    </source>
</evidence>
<name>Y1559_RALN1</name>
<protein>
    <recommendedName>
        <fullName evidence="1">UPF0761 membrane protein RSc1559</fullName>
    </recommendedName>
</protein>
<feature type="chain" id="PRO_0000391050" description="UPF0761 membrane protein RSc1559">
    <location>
        <begin position="1"/>
        <end position="441"/>
    </location>
</feature>
<feature type="transmembrane region" description="Helical" evidence="1">
    <location>
        <begin position="44"/>
        <end position="64"/>
    </location>
</feature>
<feature type="transmembrane region" description="Helical" evidence="1">
    <location>
        <begin position="101"/>
        <end position="121"/>
    </location>
</feature>
<feature type="transmembrane region" description="Helical" evidence="1">
    <location>
        <begin position="141"/>
        <end position="161"/>
    </location>
</feature>
<feature type="transmembrane region" description="Helical" evidence="1">
    <location>
        <begin position="182"/>
        <end position="202"/>
    </location>
</feature>
<feature type="transmembrane region" description="Helical" evidence="1">
    <location>
        <begin position="207"/>
        <end position="227"/>
    </location>
</feature>
<feature type="transmembrane region" description="Helical" evidence="1">
    <location>
        <begin position="248"/>
        <end position="268"/>
    </location>
</feature>
<comment type="subcellular location">
    <subcellularLocation>
        <location evidence="1">Cell inner membrane</location>
        <topology evidence="1">Multi-pass membrane protein</topology>
    </subcellularLocation>
</comment>
<comment type="similarity">
    <text evidence="1">Belongs to the UPF0761 family.</text>
</comment>